<comment type="function">
    <text evidence="3">ATP-independent protease that degrades both mitochondrial and chloroplastic transit peptides after their cleavage. Also degrades other unstructured peptides. Specific for peptides in the range of 10 to 65 residues. Shows a preference for cleavage after small polar residues and before basic residues, but without any positional preference.</text>
</comment>
<comment type="cofactor">
    <cofactor evidence="1">
        <name>Zn(2+)</name>
        <dbReference type="ChEBI" id="CHEBI:29105"/>
    </cofactor>
    <text evidence="1">Binds 1 zinc ion per subunit.</text>
</comment>
<comment type="cofactor">
    <cofactor evidence="1">
        <name>Mg(2+)</name>
        <dbReference type="ChEBI" id="CHEBI:18420"/>
    </cofactor>
    <text evidence="1">Binds 2 cations, such as magnesium or calcium, per subunit.</text>
</comment>
<comment type="activity regulation">
    <text>Completely inhibited by the metal chelator orthophenanthroline.</text>
</comment>
<comment type="subunit">
    <text evidence="1">Homodimer.</text>
</comment>
<comment type="subcellular location">
    <subcellularLocation>
        <location evidence="4">Plastid</location>
        <location evidence="4">Chloroplast stroma</location>
    </subcellularLocation>
    <subcellularLocation>
        <location evidence="4">Mitochondrion matrix</location>
    </subcellularLocation>
</comment>
<comment type="tissue specificity">
    <text evidence="4">Expressed in leaves, flowers and roots, but not detected in siliques and shoots.</text>
</comment>
<comment type="similarity">
    <text evidence="5">Belongs to the peptidase M16 family. PreP subfamily.</text>
</comment>
<comment type="sequence caution" evidence="5">
    <conflict type="erroneous gene model prediction">
        <sequence resource="EMBL-CDS" id="AAG13049"/>
    </conflict>
</comment>
<dbReference type="EC" id="3.4.24.-"/>
<dbReference type="EMBL" id="AC011807">
    <property type="protein sequence ID" value="AAG13049.1"/>
    <property type="status" value="ALT_SEQ"/>
    <property type="molecule type" value="Genomic_DNA"/>
</dbReference>
<dbReference type="EMBL" id="CP002684">
    <property type="protein sequence ID" value="AEE32451.1"/>
    <property type="molecule type" value="Genomic_DNA"/>
</dbReference>
<dbReference type="EMBL" id="CP002684">
    <property type="protein sequence ID" value="AEE32452.1"/>
    <property type="molecule type" value="Genomic_DNA"/>
</dbReference>
<dbReference type="EMBL" id="CP002684">
    <property type="protein sequence ID" value="AEE32453.1"/>
    <property type="molecule type" value="Genomic_DNA"/>
</dbReference>
<dbReference type="EMBL" id="AY074305">
    <property type="protein sequence ID" value="AAL67002.1"/>
    <property type="molecule type" value="mRNA"/>
</dbReference>
<dbReference type="EMBL" id="BT004376">
    <property type="protein sequence ID" value="AAO42370.1"/>
    <property type="molecule type" value="mRNA"/>
</dbReference>
<dbReference type="PIR" id="A96533">
    <property type="entry name" value="A96533"/>
</dbReference>
<dbReference type="RefSeq" id="NP_175386.2">
    <property type="nucleotide sequence ID" value="NM_103851.3"/>
</dbReference>
<dbReference type="RefSeq" id="NP_850961.1">
    <property type="nucleotide sequence ID" value="NM_180630.2"/>
</dbReference>
<dbReference type="RefSeq" id="NP_850962.1">
    <property type="nucleotide sequence ID" value="NM_180631.2"/>
</dbReference>
<dbReference type="SMR" id="Q8VY06"/>
<dbReference type="BioGRID" id="26612">
    <property type="interactions" value="15"/>
</dbReference>
<dbReference type="FunCoup" id="Q8VY06">
    <property type="interactions" value="3813"/>
</dbReference>
<dbReference type="STRING" id="3702.Q8VY06"/>
<dbReference type="MEROPS" id="M16.018"/>
<dbReference type="MetOSite" id="Q8VY06"/>
<dbReference type="PaxDb" id="3702-AT1G49630.1"/>
<dbReference type="ProteomicsDB" id="236597"/>
<dbReference type="EnsemblPlants" id="AT1G49630.1">
    <property type="protein sequence ID" value="AT1G49630.1"/>
    <property type="gene ID" value="AT1G49630"/>
</dbReference>
<dbReference type="EnsemblPlants" id="AT1G49630.2">
    <property type="protein sequence ID" value="AT1G49630.2"/>
    <property type="gene ID" value="AT1G49630"/>
</dbReference>
<dbReference type="EnsemblPlants" id="AT1G49630.3">
    <property type="protein sequence ID" value="AT1G49630.3"/>
    <property type="gene ID" value="AT1G49630"/>
</dbReference>
<dbReference type="GeneID" id="841387"/>
<dbReference type="Gramene" id="AT1G49630.1">
    <property type="protein sequence ID" value="AT1G49630.1"/>
    <property type="gene ID" value="AT1G49630"/>
</dbReference>
<dbReference type="Gramene" id="AT1G49630.2">
    <property type="protein sequence ID" value="AT1G49630.2"/>
    <property type="gene ID" value="AT1G49630"/>
</dbReference>
<dbReference type="Gramene" id="AT1G49630.3">
    <property type="protein sequence ID" value="AT1G49630.3"/>
    <property type="gene ID" value="AT1G49630"/>
</dbReference>
<dbReference type="KEGG" id="ath:AT1G49630"/>
<dbReference type="Araport" id="AT1G49630"/>
<dbReference type="TAIR" id="AT1G49630">
    <property type="gene designation" value="PREP2"/>
</dbReference>
<dbReference type="eggNOG" id="KOG2019">
    <property type="taxonomic scope" value="Eukaryota"/>
</dbReference>
<dbReference type="HOGENOM" id="CLU_009165_1_0_1"/>
<dbReference type="InParanoid" id="Q8VY06"/>
<dbReference type="OMA" id="FPFQVHY"/>
<dbReference type="PhylomeDB" id="Q8VY06"/>
<dbReference type="PRO" id="PR:Q8VY06"/>
<dbReference type="Proteomes" id="UP000006548">
    <property type="component" value="Chromosome 1"/>
</dbReference>
<dbReference type="ExpressionAtlas" id="Q8VY06">
    <property type="expression patterns" value="baseline and differential"/>
</dbReference>
<dbReference type="GO" id="GO:0009507">
    <property type="term" value="C:chloroplast"/>
    <property type="evidence" value="ECO:0000314"/>
    <property type="project" value="TAIR"/>
</dbReference>
<dbReference type="GO" id="GO:0009570">
    <property type="term" value="C:chloroplast stroma"/>
    <property type="evidence" value="ECO:0007669"/>
    <property type="project" value="UniProtKB-SubCell"/>
</dbReference>
<dbReference type="GO" id="GO:0005759">
    <property type="term" value="C:mitochondrial matrix"/>
    <property type="evidence" value="ECO:0007669"/>
    <property type="project" value="UniProtKB-SubCell"/>
</dbReference>
<dbReference type="GO" id="GO:0005739">
    <property type="term" value="C:mitochondrion"/>
    <property type="evidence" value="ECO:0000314"/>
    <property type="project" value="TAIR"/>
</dbReference>
<dbReference type="GO" id="GO:0005634">
    <property type="term" value="C:nucleus"/>
    <property type="evidence" value="ECO:0007005"/>
    <property type="project" value="TAIR"/>
</dbReference>
<dbReference type="GO" id="GO:0046872">
    <property type="term" value="F:metal ion binding"/>
    <property type="evidence" value="ECO:0007669"/>
    <property type="project" value="UniProtKB-KW"/>
</dbReference>
<dbReference type="GO" id="GO:0008237">
    <property type="term" value="F:metallopeptidase activity"/>
    <property type="evidence" value="ECO:0007669"/>
    <property type="project" value="UniProtKB-KW"/>
</dbReference>
<dbReference type="GO" id="GO:0016485">
    <property type="term" value="P:protein processing"/>
    <property type="evidence" value="ECO:0000314"/>
    <property type="project" value="TAIR"/>
</dbReference>
<dbReference type="FunFam" id="3.30.830.10:FF:000037">
    <property type="entry name" value="Presequence protease 1"/>
    <property type="match status" value="1"/>
</dbReference>
<dbReference type="FunFam" id="3.30.830.10:FF:000034">
    <property type="entry name" value="presequence protease 1, chloroplastic/mitochondrial"/>
    <property type="match status" value="1"/>
</dbReference>
<dbReference type="FunFam" id="3.30.830.10:FF:000009">
    <property type="entry name" value="Presequence protease, mitochondrial"/>
    <property type="match status" value="1"/>
</dbReference>
<dbReference type="Gene3D" id="3.30.830.10">
    <property type="entry name" value="Metalloenzyme, LuxS/M16 peptidase-like"/>
    <property type="match status" value="4"/>
</dbReference>
<dbReference type="InterPro" id="IPR011249">
    <property type="entry name" value="Metalloenz_LuxS/M16"/>
</dbReference>
<dbReference type="InterPro" id="IPR011765">
    <property type="entry name" value="Pept_M16_N"/>
</dbReference>
<dbReference type="InterPro" id="IPR007863">
    <property type="entry name" value="Peptidase_M16_C"/>
</dbReference>
<dbReference type="InterPro" id="IPR013578">
    <property type="entry name" value="Peptidase_M16C_assoc"/>
</dbReference>
<dbReference type="InterPro" id="IPR055130">
    <property type="entry name" value="PreP_C"/>
</dbReference>
<dbReference type="PANTHER" id="PTHR43016">
    <property type="entry name" value="PRESEQUENCE PROTEASE"/>
    <property type="match status" value="1"/>
</dbReference>
<dbReference type="PANTHER" id="PTHR43016:SF13">
    <property type="entry name" value="PRESEQUENCE PROTEASE, MITOCHONDRIAL"/>
    <property type="match status" value="1"/>
</dbReference>
<dbReference type="Pfam" id="PF08367">
    <property type="entry name" value="M16C_assoc"/>
    <property type="match status" value="1"/>
</dbReference>
<dbReference type="Pfam" id="PF00675">
    <property type="entry name" value="Peptidase_M16"/>
    <property type="match status" value="1"/>
</dbReference>
<dbReference type="Pfam" id="PF05193">
    <property type="entry name" value="Peptidase_M16_C"/>
    <property type="match status" value="1"/>
</dbReference>
<dbReference type="Pfam" id="PF22516">
    <property type="entry name" value="PreP_C"/>
    <property type="match status" value="1"/>
</dbReference>
<dbReference type="SMART" id="SM01264">
    <property type="entry name" value="M16C_associated"/>
    <property type="match status" value="1"/>
</dbReference>
<dbReference type="SUPFAM" id="SSF63411">
    <property type="entry name" value="LuxS/MPP-like metallohydrolase"/>
    <property type="match status" value="4"/>
</dbReference>
<feature type="transit peptide" description="Chloroplast and mitochondrion" evidence="2">
    <location>
        <begin position="1"/>
        <end position="84"/>
    </location>
</feature>
<feature type="chain" id="PRO_0000249939" description="Presequence protease 2, chloroplastic/mitochondrial">
    <location>
        <begin position="85"/>
        <end position="1080"/>
    </location>
</feature>
<feature type="active site" description="Proton acceptor" evidence="1">
    <location>
        <position position="164"/>
    </location>
</feature>
<feature type="active site" evidence="1">
    <location>
        <position position="239"/>
    </location>
</feature>
<feature type="binding site" evidence="1">
    <location>
        <position position="161"/>
    </location>
    <ligand>
        <name>Zn(2+)</name>
        <dbReference type="ChEBI" id="CHEBI:29105"/>
    </ligand>
</feature>
<feature type="binding site" evidence="1">
    <location>
        <position position="165"/>
    </location>
    <ligand>
        <name>Zn(2+)</name>
        <dbReference type="ChEBI" id="CHEBI:29105"/>
    </ligand>
</feature>
<feature type="binding site" evidence="1">
    <location>
        <position position="261"/>
    </location>
    <ligand>
        <name>Zn(2+)</name>
        <dbReference type="ChEBI" id="CHEBI:29105"/>
    </ligand>
</feature>
<feature type="binding site" evidence="1">
    <location>
        <position position="704"/>
    </location>
    <ligand>
        <name>Mg(2+)</name>
        <dbReference type="ChEBI" id="CHEBI:18420"/>
    </ligand>
</feature>
<gene>
    <name type="primary">PREP2</name>
    <name type="synonym">ZNMP2</name>
    <name type="ordered locus">At1g49630</name>
    <name type="ORF">F14J22.13</name>
</gene>
<reference key="1">
    <citation type="journal article" date="2000" name="Nature">
        <title>Sequence and analysis of chromosome 1 of the plant Arabidopsis thaliana.</title>
        <authorList>
            <person name="Theologis A."/>
            <person name="Ecker J.R."/>
            <person name="Palm C.J."/>
            <person name="Federspiel N.A."/>
            <person name="Kaul S."/>
            <person name="White O."/>
            <person name="Alonso J."/>
            <person name="Altafi H."/>
            <person name="Araujo R."/>
            <person name="Bowman C.L."/>
            <person name="Brooks S.Y."/>
            <person name="Buehler E."/>
            <person name="Chan A."/>
            <person name="Chao Q."/>
            <person name="Chen H."/>
            <person name="Cheuk R.F."/>
            <person name="Chin C.W."/>
            <person name="Chung M.K."/>
            <person name="Conn L."/>
            <person name="Conway A.B."/>
            <person name="Conway A.R."/>
            <person name="Creasy T.H."/>
            <person name="Dewar K."/>
            <person name="Dunn P."/>
            <person name="Etgu P."/>
            <person name="Feldblyum T.V."/>
            <person name="Feng J.-D."/>
            <person name="Fong B."/>
            <person name="Fujii C.Y."/>
            <person name="Gill J.E."/>
            <person name="Goldsmith A.D."/>
            <person name="Haas B."/>
            <person name="Hansen N.F."/>
            <person name="Hughes B."/>
            <person name="Huizar L."/>
            <person name="Hunter J.L."/>
            <person name="Jenkins J."/>
            <person name="Johnson-Hopson C."/>
            <person name="Khan S."/>
            <person name="Khaykin E."/>
            <person name="Kim C.J."/>
            <person name="Koo H.L."/>
            <person name="Kremenetskaia I."/>
            <person name="Kurtz D.B."/>
            <person name="Kwan A."/>
            <person name="Lam B."/>
            <person name="Langin-Hooper S."/>
            <person name="Lee A."/>
            <person name="Lee J.M."/>
            <person name="Lenz C.A."/>
            <person name="Li J.H."/>
            <person name="Li Y.-P."/>
            <person name="Lin X."/>
            <person name="Liu S.X."/>
            <person name="Liu Z.A."/>
            <person name="Luros J.S."/>
            <person name="Maiti R."/>
            <person name="Marziali A."/>
            <person name="Militscher J."/>
            <person name="Miranda M."/>
            <person name="Nguyen M."/>
            <person name="Nierman W.C."/>
            <person name="Osborne B.I."/>
            <person name="Pai G."/>
            <person name="Peterson J."/>
            <person name="Pham P.K."/>
            <person name="Rizzo M."/>
            <person name="Rooney T."/>
            <person name="Rowley D."/>
            <person name="Sakano H."/>
            <person name="Salzberg S.L."/>
            <person name="Schwartz J.R."/>
            <person name="Shinn P."/>
            <person name="Southwick A.M."/>
            <person name="Sun H."/>
            <person name="Tallon L.J."/>
            <person name="Tambunga G."/>
            <person name="Toriumi M.J."/>
            <person name="Town C.D."/>
            <person name="Utterback T."/>
            <person name="Van Aken S."/>
            <person name="Vaysberg M."/>
            <person name="Vysotskaia V.S."/>
            <person name="Walker M."/>
            <person name="Wu D."/>
            <person name="Yu G."/>
            <person name="Fraser C.M."/>
            <person name="Venter J.C."/>
            <person name="Davis R.W."/>
        </authorList>
    </citation>
    <scope>NUCLEOTIDE SEQUENCE [LARGE SCALE GENOMIC DNA]</scope>
    <source>
        <strain>cv. Columbia</strain>
    </source>
</reference>
<reference key="2">
    <citation type="journal article" date="2017" name="Plant J.">
        <title>Araport11: a complete reannotation of the Arabidopsis thaliana reference genome.</title>
        <authorList>
            <person name="Cheng C.Y."/>
            <person name="Krishnakumar V."/>
            <person name="Chan A.P."/>
            <person name="Thibaud-Nissen F."/>
            <person name="Schobel S."/>
            <person name="Town C.D."/>
        </authorList>
    </citation>
    <scope>GENOME REANNOTATION</scope>
    <source>
        <strain>cv. Columbia</strain>
    </source>
</reference>
<reference key="3">
    <citation type="journal article" date="2003" name="Science">
        <title>Empirical analysis of transcriptional activity in the Arabidopsis genome.</title>
        <authorList>
            <person name="Yamada K."/>
            <person name="Lim J."/>
            <person name="Dale J.M."/>
            <person name="Chen H."/>
            <person name="Shinn P."/>
            <person name="Palm C.J."/>
            <person name="Southwick A.M."/>
            <person name="Wu H.C."/>
            <person name="Kim C.J."/>
            <person name="Nguyen M."/>
            <person name="Pham P.K."/>
            <person name="Cheuk R.F."/>
            <person name="Karlin-Newmann G."/>
            <person name="Liu S.X."/>
            <person name="Lam B."/>
            <person name="Sakano H."/>
            <person name="Wu T."/>
            <person name="Yu G."/>
            <person name="Miranda M."/>
            <person name="Quach H.L."/>
            <person name="Tripp M."/>
            <person name="Chang C.H."/>
            <person name="Lee J.M."/>
            <person name="Toriumi M.J."/>
            <person name="Chan M.M."/>
            <person name="Tang C.C."/>
            <person name="Onodera C.S."/>
            <person name="Deng J.M."/>
            <person name="Akiyama K."/>
            <person name="Ansari Y."/>
            <person name="Arakawa T."/>
            <person name="Banh J."/>
            <person name="Banno F."/>
            <person name="Bowser L."/>
            <person name="Brooks S.Y."/>
            <person name="Carninci P."/>
            <person name="Chao Q."/>
            <person name="Choy N."/>
            <person name="Enju A."/>
            <person name="Goldsmith A.D."/>
            <person name="Gurjal M."/>
            <person name="Hansen N.F."/>
            <person name="Hayashizaki Y."/>
            <person name="Johnson-Hopson C."/>
            <person name="Hsuan V.W."/>
            <person name="Iida K."/>
            <person name="Karnes M."/>
            <person name="Khan S."/>
            <person name="Koesema E."/>
            <person name="Ishida J."/>
            <person name="Jiang P.X."/>
            <person name="Jones T."/>
            <person name="Kawai J."/>
            <person name="Kamiya A."/>
            <person name="Meyers C."/>
            <person name="Nakajima M."/>
            <person name="Narusaka M."/>
            <person name="Seki M."/>
            <person name="Sakurai T."/>
            <person name="Satou M."/>
            <person name="Tamse R."/>
            <person name="Vaysberg M."/>
            <person name="Wallender E.K."/>
            <person name="Wong C."/>
            <person name="Yamamura Y."/>
            <person name="Yuan S."/>
            <person name="Shinozaki K."/>
            <person name="Davis R.W."/>
            <person name="Theologis A."/>
            <person name="Ecker J.R."/>
        </authorList>
    </citation>
    <scope>NUCLEOTIDE SEQUENCE [LARGE SCALE MRNA]</scope>
    <source>
        <strain>cv. Columbia</strain>
    </source>
</reference>
<reference key="4">
    <citation type="journal article" date="2002" name="J. Biol. Chem.">
        <title>Isolation and identification of a novel mitochondrial metalloprotease (PreP) that degrades targeting presequences in plants.</title>
        <authorList>
            <person name="Staahl A."/>
            <person name="Moberg P."/>
            <person name="Ytterberg J."/>
            <person name="Panfilov O."/>
            <person name="Brockenhuus Von Lowenhielm H."/>
            <person name="Nilsson F."/>
            <person name="Glaser E."/>
        </authorList>
    </citation>
    <scope>IDENTIFICATION BY MASS SPECTROMETRY</scope>
    <scope>FUNCTION</scope>
</reference>
<reference key="5">
    <citation type="journal article" date="2005" name="Plant Cell Physiol.">
        <title>Catalysis, subcellular localization, expression and evolution of the targeting peptides degrading protease, AtPreP2.</title>
        <authorList>
            <person name="Bhushan S."/>
            <person name="Staahl A."/>
            <person name="Nilsson S."/>
            <person name="Lefebvre B."/>
            <person name="Seki M."/>
            <person name="Roth C."/>
            <person name="McWilliam D."/>
            <person name="Wright S.J."/>
            <person name="Liberles D.A."/>
            <person name="Shinozaki K."/>
            <person name="Bruce B.D."/>
            <person name="Boutry M."/>
            <person name="Glaser E."/>
        </authorList>
    </citation>
    <scope>CHARACTERIZATION</scope>
    <scope>IDENTIFICATION BY MASS SPECTROMETRY</scope>
    <scope>TISSUE SPECIFICITY</scope>
    <scope>SUBCELLULAR LOCATION</scope>
</reference>
<reference key="6">
    <citation type="journal article" date="2005" name="J. Mol. Biol.">
        <title>Two novel targeting peptide degrading proteases, PrePs, in mitochondria and chloroplasts, so similar and still different.</title>
        <authorList>
            <person name="Staahl A."/>
            <person name="Nilsson S."/>
            <person name="Lundberg P."/>
            <person name="Bhushan S."/>
            <person name="Biverstaahl H."/>
            <person name="Moberg P."/>
            <person name="Morisset M."/>
            <person name="Vener A."/>
            <person name="Maeler L."/>
            <person name="Langel U."/>
            <person name="Glaser E."/>
        </authorList>
    </citation>
    <scope>CLEAVAGE SPECIFICITY</scope>
</reference>
<sequence length="1080" mass="121131">MLRSLTCSSTITSTSLFFRSFRQLPRSYLSPSSSTTVVGASGRNIRRLSTLEAAGRRLFLRRGLKLLSAASRGLNGQFSRLSIRAVATQSAPSSYPGQDEAEKLGFEKVSEEFISECKSKAVLFKHKKTGCEVMSVSNDDENKVFGIVFRTPPKDSTGIPHILEHSVLCGSRKYPMKEPFVELLKGSLHTFLNAFTYPDRTCYPVASTNKKDFYNLVDVYLDAVFFPKCVDDVHTFQQEGWHYELNDPSEDISYKGVVFNEMKGVYSQPDNILGRVTQQALCPENTYGVDSGGDPKDIPKLTFEKFKEFHRQYYHPSNARIWFYGDDDPVHRLRVLSEYLDMFDASPARDSSKVEPQKLFSRPRRIVEKYPAGEDGDLKKKHMVCLNWLLSDKPLDLQTQLALGFLDHLMLGTPASPLRKILLESGLGEALVNSGMEDELLQPQFSIGLKGVSDDNVQKVEELVMNTLRKLADEGFDTDAVEASMNTIEFSLRENNTGSSPRGLSLMLQSIAKWIYDMDPFEPLKYEEPLKSLKARIAEKGSKSVFSPLIEEYILNNPHCVTIEMQPDPEKASLEEAEEKSILEKVKASMTEEDLTELARATEELRLKQETPDPPDALKCVPSLNLSDIPKEPIYVPTEVGDINGVKVLRNDLFTNNILYTEVVFDMGSVKHELLQLIPLFCQSLLEMGTQDLTFVQLNQLIGRKTGGISVYPLTSSVYGRDDPCSKIIVRGKSMVGRAEDLFNLMNCVLQEVRFTDQQRFKQFVSQSRARMENRLRGSGQGIAAARMDAMLNVAGWMSEQMGGLSYLEFLHTLEQKVDQDWEGISSSLEEIRRSFLSRNGCIVNMTADGKSLTNTEKYVGKFLDLLPENPSGELVTWDARLPLRNEAIVIPTQVNYVGKAGNIYSSGYKLDGSSYVISKHISNTWLWDRVRVSGGAYGGSCDFDSHSGVFSFLSYRDPNLLKTLDIYDGTGDFLRGLDVDEDTLTKAIIGTIGDVDSYQLPDAKGYTSLLRHLLNVTDEERQIRREEILSTSLKDFKEFAEAIDSVSDKGVAVAVASQEDIDAANRERSNFFEVKKAAL</sequence>
<evidence type="ECO:0000250" key="1">
    <source>
        <dbReference type="UniProtKB" id="Q9LJL3"/>
    </source>
</evidence>
<evidence type="ECO:0000255" key="2"/>
<evidence type="ECO:0000269" key="3">
    <source>
    </source>
</evidence>
<evidence type="ECO:0000269" key="4">
    <source>
    </source>
</evidence>
<evidence type="ECO:0000305" key="5"/>
<proteinExistence type="evidence at protein level"/>
<accession>Q8VY06</accession>
<accession>Q9FX91</accession>
<protein>
    <recommendedName>
        <fullName>Presequence protease 2, chloroplastic/mitochondrial</fullName>
        <shortName>AtPreP2</shortName>
        <shortName>PreP 2</shortName>
        <ecNumber>3.4.24.-</ecNumber>
    </recommendedName>
    <alternativeName>
        <fullName>Zinc metalloprotease 2</fullName>
        <shortName>AtZnMP2</shortName>
    </alternativeName>
</protein>
<organism>
    <name type="scientific">Arabidopsis thaliana</name>
    <name type="common">Mouse-ear cress</name>
    <dbReference type="NCBI Taxonomy" id="3702"/>
    <lineage>
        <taxon>Eukaryota</taxon>
        <taxon>Viridiplantae</taxon>
        <taxon>Streptophyta</taxon>
        <taxon>Embryophyta</taxon>
        <taxon>Tracheophyta</taxon>
        <taxon>Spermatophyta</taxon>
        <taxon>Magnoliopsida</taxon>
        <taxon>eudicotyledons</taxon>
        <taxon>Gunneridae</taxon>
        <taxon>Pentapetalae</taxon>
        <taxon>rosids</taxon>
        <taxon>malvids</taxon>
        <taxon>Brassicales</taxon>
        <taxon>Brassicaceae</taxon>
        <taxon>Camelineae</taxon>
        <taxon>Arabidopsis</taxon>
    </lineage>
</organism>
<keyword id="KW-0150">Chloroplast</keyword>
<keyword id="KW-0378">Hydrolase</keyword>
<keyword id="KW-0460">Magnesium</keyword>
<keyword id="KW-0479">Metal-binding</keyword>
<keyword id="KW-0482">Metalloprotease</keyword>
<keyword id="KW-0496">Mitochondrion</keyword>
<keyword id="KW-0934">Plastid</keyword>
<keyword id="KW-0645">Protease</keyword>
<keyword id="KW-1185">Reference proteome</keyword>
<keyword id="KW-0809">Transit peptide</keyword>
<keyword id="KW-0862">Zinc</keyword>
<name>PREP2_ARATH</name>